<reference key="1">
    <citation type="journal article" date="2006" name="Planta">
        <title>Function and transcript analysis of gibberellin-biosynthetic enzymes in wheat.</title>
        <authorList>
            <person name="Appleford N.E."/>
            <person name="Evans D.J."/>
            <person name="Lenton J.R."/>
            <person name="Gaskin P."/>
            <person name="Croker S.J."/>
            <person name="Devos K.M."/>
            <person name="Phillips A.L."/>
            <person name="Hedden P."/>
        </authorList>
    </citation>
    <scope>NUCLEOTIDE SEQUENCE [MRNA]</scope>
    <scope>FUNCTION</scope>
    <source>
        <strain>cv. Maris Huntsman</strain>
        <tissue>Scutellum</tissue>
    </source>
</reference>
<feature type="chain" id="PRO_0000067319" description="Gibberellin 3-beta-dioxygenase 2-3">
    <location>
        <begin position="1"/>
        <end position="369"/>
    </location>
</feature>
<feature type="domain" description="Fe2OG dioxygenase" evidence="3">
    <location>
        <begin position="205"/>
        <end position="306"/>
    </location>
</feature>
<feature type="active site" evidence="2">
    <location>
        <position position="297"/>
    </location>
</feature>
<feature type="binding site" evidence="3">
    <location>
        <position position="229"/>
    </location>
    <ligand>
        <name>Fe cation</name>
        <dbReference type="ChEBI" id="CHEBI:24875"/>
    </ligand>
</feature>
<feature type="binding site" evidence="3">
    <location>
        <position position="231"/>
    </location>
    <ligand>
        <name>Fe cation</name>
        <dbReference type="ChEBI" id="CHEBI:24875"/>
    </ligand>
</feature>
<feature type="binding site" evidence="3">
    <location>
        <position position="287"/>
    </location>
    <ligand>
        <name>Fe cation</name>
        <dbReference type="ChEBI" id="CHEBI:24875"/>
    </ligand>
</feature>
<organism>
    <name type="scientific">Triticum aestivum</name>
    <name type="common">Wheat</name>
    <dbReference type="NCBI Taxonomy" id="4565"/>
    <lineage>
        <taxon>Eukaryota</taxon>
        <taxon>Viridiplantae</taxon>
        <taxon>Streptophyta</taxon>
        <taxon>Embryophyta</taxon>
        <taxon>Tracheophyta</taxon>
        <taxon>Spermatophyta</taxon>
        <taxon>Magnoliopsida</taxon>
        <taxon>Liliopsida</taxon>
        <taxon>Poales</taxon>
        <taxon>Poaceae</taxon>
        <taxon>BOP clade</taxon>
        <taxon>Pooideae</taxon>
        <taxon>Triticodae</taxon>
        <taxon>Triticeae</taxon>
        <taxon>Triticinae</taxon>
        <taxon>Triticum</taxon>
    </lineage>
</organism>
<comment type="function">
    <text evidence="4">Converts the inactive gibberellin precursors GA9 and GA20 in the bioactives gibberellins GA4 and GA1.</text>
</comment>
<comment type="catalytic activity">
    <reaction>
        <text>gibberellin A20 + 2-oxoglutarate + O2 = gibberellin A1 + succinate + CO2</text>
        <dbReference type="Rhea" id="RHEA:10104"/>
        <dbReference type="ChEBI" id="CHEBI:15379"/>
        <dbReference type="ChEBI" id="CHEBI:16526"/>
        <dbReference type="ChEBI" id="CHEBI:16810"/>
        <dbReference type="ChEBI" id="CHEBI:30031"/>
        <dbReference type="ChEBI" id="CHEBI:58524"/>
        <dbReference type="ChEBI" id="CHEBI:58526"/>
        <dbReference type="EC" id="1.14.11.15"/>
    </reaction>
</comment>
<comment type="cofactor">
    <cofactor evidence="1">
        <name>L-ascorbate</name>
        <dbReference type="ChEBI" id="CHEBI:38290"/>
    </cofactor>
</comment>
<comment type="cofactor">
    <cofactor evidence="1">
        <name>Fe cation</name>
        <dbReference type="ChEBI" id="CHEBI:24875"/>
    </cofactor>
</comment>
<comment type="similarity">
    <text evidence="5">Belongs to the iron/ascorbate-dependent oxidoreductase family. GA3OX subfamily.</text>
</comment>
<dbReference type="EC" id="1.14.11.15"/>
<dbReference type="EMBL" id="DQ118252">
    <property type="protein sequence ID" value="AAZ94379.1"/>
    <property type="molecule type" value="mRNA"/>
</dbReference>
<dbReference type="SMR" id="Q3I409"/>
<dbReference type="STRING" id="4565.Q3I409"/>
<dbReference type="PaxDb" id="4565-Traes_3B_791A6E8DF.1"/>
<dbReference type="EnsemblPlants" id="TraesARI3B03G01611770.1">
    <property type="protein sequence ID" value="TraesARI3B03G01611770.1"/>
    <property type="gene ID" value="TraesARI3B03G01611770"/>
</dbReference>
<dbReference type="EnsemblPlants" id="TraesCAD_scaffold_041986_01G000200.1">
    <property type="protein sequence ID" value="TraesCAD_scaffold_041986_01G000200.1"/>
    <property type="gene ID" value="TraesCAD_scaffold_041986_01G000200"/>
</dbReference>
<dbReference type="EnsemblPlants" id="TraesCLE_scaffold_003708_01G000100.1">
    <property type="protein sequence ID" value="TraesCLE_scaffold_003708_01G000100.1"/>
    <property type="gene ID" value="TraesCLE_scaffold_003708_01G000100"/>
</dbReference>
<dbReference type="EnsemblPlants" id="TraesJAG3B03G01596720.1">
    <property type="protein sequence ID" value="TraesJAG3B03G01596720.1"/>
    <property type="gene ID" value="TraesJAG3B03G01596720"/>
</dbReference>
<dbReference type="EnsemblPlants" id="TraesJUL3B03G01600550.1">
    <property type="protein sequence ID" value="TraesJUL3B03G01600550.1"/>
    <property type="gene ID" value="TraesJUL3B03G01600550"/>
</dbReference>
<dbReference type="EnsemblPlants" id="TraesKAR3B01G0097040.1">
    <property type="protein sequence ID" value="cds.TraesKAR3B01G0097040.1"/>
    <property type="gene ID" value="TraesKAR3B01G0097040"/>
</dbReference>
<dbReference type="EnsemblPlants" id="TraesLAC3B03G01529410.1">
    <property type="protein sequence ID" value="TraesLAC3B03G01529410.1"/>
    <property type="gene ID" value="TraesLAC3B03G01529410"/>
</dbReference>
<dbReference type="EnsemblPlants" id="TraesLDM3B03G01587940.1">
    <property type="protein sequence ID" value="TraesLDM3B03G01587940.1"/>
    <property type="gene ID" value="TraesLDM3B03G01587940"/>
</dbReference>
<dbReference type="EnsemblPlants" id="TraesMAC3B03G01587310.1">
    <property type="protein sequence ID" value="TraesMAC3B03G01587310.1"/>
    <property type="gene ID" value="TraesMAC3B03G01587310"/>
</dbReference>
<dbReference type="EnsemblPlants" id="TraesPARA_EIv1.0_1014450.1">
    <property type="protein sequence ID" value="TraesPARA_EIv1.0_1014450.1.CDS"/>
    <property type="gene ID" value="TraesPARA_EIv1.0_1014450"/>
</dbReference>
<dbReference type="EnsemblPlants" id="TraesROB_scaffold_007358_01G000100.1">
    <property type="protein sequence ID" value="TraesROB_scaffold_007358_01G000100.1"/>
    <property type="gene ID" value="TraesROB_scaffold_007358_01G000100"/>
</dbReference>
<dbReference type="EnsemblPlants" id="TraesSYM3B03G01610120.1">
    <property type="protein sequence ID" value="TraesSYM3B03G01610120.1"/>
    <property type="gene ID" value="TraesSYM3B03G01610120"/>
</dbReference>
<dbReference type="Gramene" id="TraesARI3B03G01611770.1">
    <property type="protein sequence ID" value="TraesARI3B03G01611770.1"/>
    <property type="gene ID" value="TraesARI3B03G01611770"/>
</dbReference>
<dbReference type="Gramene" id="TraesCAD_scaffold_041986_01G000200.1">
    <property type="protein sequence ID" value="TraesCAD_scaffold_041986_01G000200.1"/>
    <property type="gene ID" value="TraesCAD_scaffold_041986_01G000200"/>
</dbReference>
<dbReference type="Gramene" id="TraesCLE_scaffold_003708_01G000100.1">
    <property type="protein sequence ID" value="TraesCLE_scaffold_003708_01G000100.1"/>
    <property type="gene ID" value="TraesCLE_scaffold_003708_01G000100"/>
</dbReference>
<dbReference type="Gramene" id="TraesJAG3B03G01596720.1">
    <property type="protein sequence ID" value="TraesJAG3B03G01596720.1"/>
    <property type="gene ID" value="TraesJAG3B03G01596720"/>
</dbReference>
<dbReference type="Gramene" id="TraesJUL3B03G01600550.1">
    <property type="protein sequence ID" value="TraesJUL3B03G01600550.1"/>
    <property type="gene ID" value="TraesJUL3B03G01600550"/>
</dbReference>
<dbReference type="Gramene" id="TraesKAR3B01G0097040.1">
    <property type="protein sequence ID" value="cds.TraesKAR3B01G0097040.1"/>
    <property type="gene ID" value="TraesKAR3B01G0097040"/>
</dbReference>
<dbReference type="Gramene" id="TraesLAC3B03G01529410.1">
    <property type="protein sequence ID" value="TraesLAC3B03G01529410.1"/>
    <property type="gene ID" value="TraesLAC3B03G01529410"/>
</dbReference>
<dbReference type="Gramene" id="TraesLDM3B03G01587940.1">
    <property type="protein sequence ID" value="TraesLDM3B03G01587940.1"/>
    <property type="gene ID" value="TraesLDM3B03G01587940"/>
</dbReference>
<dbReference type="Gramene" id="TraesMAC3B03G01587310.1">
    <property type="protein sequence ID" value="TraesMAC3B03G01587310.1"/>
    <property type="gene ID" value="TraesMAC3B03G01587310"/>
</dbReference>
<dbReference type="Gramene" id="TraesPARA_EIv1.0_1014450.1">
    <property type="protein sequence ID" value="TraesPARA_EIv1.0_1014450.1.CDS"/>
    <property type="gene ID" value="TraesPARA_EIv1.0_1014450"/>
</dbReference>
<dbReference type="Gramene" id="TraesROB_scaffold_007358_01G000100.1">
    <property type="protein sequence ID" value="TraesROB_scaffold_007358_01G000100.1"/>
    <property type="gene ID" value="TraesROB_scaffold_007358_01G000100"/>
</dbReference>
<dbReference type="Gramene" id="TraesSYM3B03G01610120.1">
    <property type="protein sequence ID" value="TraesSYM3B03G01610120.1"/>
    <property type="gene ID" value="TraesSYM3B03G01610120"/>
</dbReference>
<dbReference type="eggNOG" id="KOG0143">
    <property type="taxonomic scope" value="Eukaryota"/>
</dbReference>
<dbReference type="BioCyc" id="MetaCyc:MONOMER-11646"/>
<dbReference type="BRENDA" id="1.14.11.15">
    <property type="organism ID" value="6500"/>
</dbReference>
<dbReference type="Proteomes" id="UP000019116">
    <property type="component" value="Unplaced"/>
</dbReference>
<dbReference type="ExpressionAtlas" id="Q3I409">
    <property type="expression patterns" value="baseline and differential"/>
</dbReference>
<dbReference type="GO" id="GO:0016707">
    <property type="term" value="F:gibberellin 3-beta-dioxygenase activity"/>
    <property type="evidence" value="ECO:0000318"/>
    <property type="project" value="GO_Central"/>
</dbReference>
<dbReference type="GO" id="GO:0046872">
    <property type="term" value="F:metal ion binding"/>
    <property type="evidence" value="ECO:0007669"/>
    <property type="project" value="UniProtKB-KW"/>
</dbReference>
<dbReference type="GO" id="GO:0009686">
    <property type="term" value="P:gibberellin biosynthetic process"/>
    <property type="evidence" value="ECO:0000318"/>
    <property type="project" value="GO_Central"/>
</dbReference>
<dbReference type="GO" id="GO:0009416">
    <property type="term" value="P:response to light stimulus"/>
    <property type="evidence" value="ECO:0000318"/>
    <property type="project" value="GO_Central"/>
</dbReference>
<dbReference type="FunFam" id="2.60.120.330:FF:000013">
    <property type="entry name" value="Gibberellin 3-beta-dioxygenase 1"/>
    <property type="match status" value="1"/>
</dbReference>
<dbReference type="Gene3D" id="2.60.120.330">
    <property type="entry name" value="B-lactam Antibiotic, Isopenicillin N Synthase, Chain"/>
    <property type="match status" value="1"/>
</dbReference>
<dbReference type="InterPro" id="IPR026992">
    <property type="entry name" value="DIOX_N"/>
</dbReference>
<dbReference type="InterPro" id="IPR044861">
    <property type="entry name" value="IPNS-like_FE2OG_OXY"/>
</dbReference>
<dbReference type="InterPro" id="IPR027443">
    <property type="entry name" value="IPNS-like_sf"/>
</dbReference>
<dbReference type="InterPro" id="IPR050231">
    <property type="entry name" value="Iron_ascorbate_oxido_reductase"/>
</dbReference>
<dbReference type="InterPro" id="IPR005123">
    <property type="entry name" value="Oxoglu/Fe-dep_dioxygenase_dom"/>
</dbReference>
<dbReference type="PANTHER" id="PTHR47990">
    <property type="entry name" value="2-OXOGLUTARATE (2OG) AND FE(II)-DEPENDENT OXYGENASE SUPERFAMILY PROTEIN-RELATED"/>
    <property type="match status" value="1"/>
</dbReference>
<dbReference type="Pfam" id="PF03171">
    <property type="entry name" value="2OG-FeII_Oxy"/>
    <property type="match status" value="1"/>
</dbReference>
<dbReference type="Pfam" id="PF14226">
    <property type="entry name" value="DIOX_N"/>
    <property type="match status" value="1"/>
</dbReference>
<dbReference type="SUPFAM" id="SSF51197">
    <property type="entry name" value="Clavaminate synthase-like"/>
    <property type="match status" value="1"/>
</dbReference>
<dbReference type="PROSITE" id="PS51471">
    <property type="entry name" value="FE2OG_OXY"/>
    <property type="match status" value="1"/>
</dbReference>
<accession>Q3I409</accession>
<protein>
    <recommendedName>
        <fullName>Gibberellin 3-beta-dioxygenase 2-3</fullName>
        <ecNumber>1.14.11.15</ecNumber>
    </recommendedName>
    <alternativeName>
        <fullName>Gibberellin 3 beta-hydroxylase 2-3</fullName>
    </alternativeName>
    <alternativeName>
        <fullName>Gibberellin 3-oxidase 2-3</fullName>
    </alternativeName>
</protein>
<sequence length="369" mass="40326">MPTPAHLSKDPHYFDFRAARRVPETHAWPGLHDHPVVDGSGAGGEPDAVPVVDMRDPFAAEAVGLAAQDWGAFLLVGHGVPLDLLVRVEAAIAGMFALPASEKMRAVRRPGDSCGYGSPPISSFFSKCMWSEGYTFSPANLRSDLRKLWPKAGHDYRHFCAVMEEFHREMRALADKLLELFLVALGLTGEQVAAVESEQKIAETMTATMHLNWYPKCPDPKRALGLIAHTDSGFFTFVLQSLVPGLQLFRHGPDRWVTVPAVPGAMVVNVGDLFQILTNGRFHSVYHRAVVNRESDRISLGYFLGPPAHVKVAPLREALAGTPAAYRAVTWPEYMGVRKKAFTTGASALKMVAISTDDAANDTDDLILS</sequence>
<evidence type="ECO:0000250" key="1"/>
<evidence type="ECO:0000255" key="2"/>
<evidence type="ECO:0000255" key="3">
    <source>
        <dbReference type="PROSITE-ProRule" id="PRU00805"/>
    </source>
</evidence>
<evidence type="ECO:0000269" key="4">
    <source>
    </source>
</evidence>
<evidence type="ECO:0000305" key="5"/>
<keyword id="KW-0223">Dioxygenase</keyword>
<keyword id="KW-0408">Iron</keyword>
<keyword id="KW-0479">Metal-binding</keyword>
<keyword id="KW-0560">Oxidoreductase</keyword>
<keyword id="KW-1185">Reference proteome</keyword>
<gene>
    <name type="primary">GA3ox2-3</name>
</gene>
<name>G3O23_WHEAT</name>
<proteinExistence type="evidence at transcript level"/>